<accession>A6ZZY8</accession>
<evidence type="ECO:0000250" key="1"/>
<evidence type="ECO:0000255" key="2">
    <source>
        <dbReference type="PROSITE-ProRule" id="PRU00541"/>
    </source>
</evidence>
<evidence type="ECO:0000255" key="3">
    <source>
        <dbReference type="PROSITE-ProRule" id="PRU00542"/>
    </source>
</evidence>
<evidence type="ECO:0000256" key="4">
    <source>
        <dbReference type="SAM" id="MobiDB-lite"/>
    </source>
</evidence>
<evidence type="ECO:0000305" key="5"/>
<sequence>MSDEDSMLLNFTTNEDTAGSSYKQAAKVTGGRWKDRRRMKMKLEGKTVSRKRKANTTGDEGIIPGRGENSIKKLHKESSYSSEEQEKYKGRNAHNTQGRTLPADSQFVSSLFTSNREITTAVNTNIHDENVAINPSNAPLKGDQFASLGVTSLLVSHLEQKMRIKKPTSIQKQAIPQIIGNAGKNDFFIHAQTGSGKTLSYLLPIISTILNMDTHVDRTSGAFALVIAPTRELASQIYHVCSTLVSCCHYLVPCLLIGGERKKSEKARLRKGCNFIIGTPGRVLDHLQNTKVIKEQLSQSLRYIVLDEGDKLMELGFDETISEIIKIVHDIPINSEKFPKLPHKLVHMLCSATLTDGVNRLRNVALKDYKLISNGTKKDSDIVTVAPDQLLQRITIVPPKLRLVTLAATLNNITKDFIASGQQSKTLRTIVFVSCSDSVEFHYDAFSGSDGHHKNLTGDSVRLLTKGNTMFPCFSDSRDPDVVIYKLHGSLSQQMRTSTLQHFARDNEATKGKHLIMFCTDVASRGLDLPHVGSVIELDPPFAVEDHLHRVGRTARAGEKGESLLFLLPGEEEKYMDYIQPYHPMGWELLKFDKEILMPAFKDVNVNRNDKFIRKDEKSSKNKDVGDKEYEWDTNATTWHLNIERRVVGDSAFKNLAVKGFISHVRAYATHISQEKKFFNVKFLHLGHLAKSFGLRERPKAMGLQSSKDGNSEKKPTKENSKNKMFRMARMAEKQIASEFNY</sequence>
<keyword id="KW-0067">ATP-binding</keyword>
<keyword id="KW-0347">Helicase</keyword>
<keyword id="KW-0378">Hydrolase</keyword>
<keyword id="KW-0547">Nucleotide-binding</keyword>
<keyword id="KW-0539">Nucleus</keyword>
<keyword id="KW-0690">Ribosome biogenesis</keyword>
<keyword id="KW-0694">RNA-binding</keyword>
<keyword id="KW-0698">rRNA processing</keyword>
<organism>
    <name type="scientific">Saccharomyces cerevisiae (strain YJM789)</name>
    <name type="common">Baker's yeast</name>
    <dbReference type="NCBI Taxonomy" id="307796"/>
    <lineage>
        <taxon>Eukaryota</taxon>
        <taxon>Fungi</taxon>
        <taxon>Dikarya</taxon>
        <taxon>Ascomycota</taxon>
        <taxon>Saccharomycotina</taxon>
        <taxon>Saccharomycetes</taxon>
        <taxon>Saccharomycetales</taxon>
        <taxon>Saccharomycetaceae</taxon>
        <taxon>Saccharomyces</taxon>
    </lineage>
</organism>
<gene>
    <name type="primary">DBP7</name>
    <name type="ORF">SCY_3398</name>
</gene>
<name>DBP7_YEAS7</name>
<protein>
    <recommendedName>
        <fullName>ATP-dependent RNA helicase DBP7</fullName>
        <ecNumber>3.6.4.13</ecNumber>
    </recommendedName>
    <alternativeName>
        <fullName>DEAD box protein 7</fullName>
    </alternativeName>
</protein>
<reference key="1">
    <citation type="journal article" date="2007" name="Proc. Natl. Acad. Sci. U.S.A.">
        <title>Genome sequencing and comparative analysis of Saccharomyces cerevisiae strain YJM789.</title>
        <authorList>
            <person name="Wei W."/>
            <person name="McCusker J.H."/>
            <person name="Hyman R.W."/>
            <person name="Jones T."/>
            <person name="Ning Y."/>
            <person name="Cao Z."/>
            <person name="Gu Z."/>
            <person name="Bruno D."/>
            <person name="Miranda M."/>
            <person name="Nguyen M."/>
            <person name="Wilhelmy J."/>
            <person name="Komp C."/>
            <person name="Tamse R."/>
            <person name="Wang X."/>
            <person name="Jia P."/>
            <person name="Luedi P."/>
            <person name="Oefner P.J."/>
            <person name="David L."/>
            <person name="Dietrich F.S."/>
            <person name="Li Y."/>
            <person name="Davis R.W."/>
            <person name="Steinmetz L.M."/>
        </authorList>
    </citation>
    <scope>NUCLEOTIDE SEQUENCE [LARGE SCALE GENOMIC DNA]</scope>
    <source>
        <strain>YJM789</strain>
    </source>
</reference>
<comment type="function">
    <text evidence="1">ATP-binding RNA helicase involved in the biogenesis of 60S ribosomal subunits and is required for the normal formation of 25S and 5.8S rRNAs.</text>
</comment>
<comment type="catalytic activity">
    <reaction>
        <text>ATP + H2O = ADP + phosphate + H(+)</text>
        <dbReference type="Rhea" id="RHEA:13065"/>
        <dbReference type="ChEBI" id="CHEBI:15377"/>
        <dbReference type="ChEBI" id="CHEBI:15378"/>
        <dbReference type="ChEBI" id="CHEBI:30616"/>
        <dbReference type="ChEBI" id="CHEBI:43474"/>
        <dbReference type="ChEBI" id="CHEBI:456216"/>
        <dbReference type="EC" id="3.6.4.13"/>
    </reaction>
</comment>
<comment type="subcellular location">
    <subcellularLocation>
        <location evidence="1">Nucleus</location>
        <location evidence="1">Nucleolus</location>
    </subcellularLocation>
</comment>
<comment type="domain">
    <text>The Q motif is unique to and characteristic of the DEAD box family of RNA helicases and controls ATP binding and hydrolysis.</text>
</comment>
<comment type="similarity">
    <text evidence="5">Belongs to the DEAD box helicase family. DDX31/DBP7 subfamily.</text>
</comment>
<feature type="chain" id="PRO_0000310220" description="ATP-dependent RNA helicase DBP7">
    <location>
        <begin position="1"/>
        <end position="742"/>
    </location>
</feature>
<feature type="domain" description="Helicase ATP-binding" evidence="2">
    <location>
        <begin position="178"/>
        <end position="372"/>
    </location>
</feature>
<feature type="domain" description="Helicase C-terminal" evidence="3">
    <location>
        <begin position="405"/>
        <end position="605"/>
    </location>
</feature>
<feature type="region of interest" description="Disordered" evidence="4">
    <location>
        <begin position="45"/>
        <end position="100"/>
    </location>
</feature>
<feature type="region of interest" description="Disordered" evidence="4">
    <location>
        <begin position="701"/>
        <end position="726"/>
    </location>
</feature>
<feature type="short sequence motif" description="Q motif">
    <location>
        <begin position="143"/>
        <end position="172"/>
    </location>
</feature>
<feature type="short sequence motif" description="DEAD box">
    <location>
        <begin position="307"/>
        <end position="310"/>
    </location>
</feature>
<feature type="compositionally biased region" description="Basic and acidic residues" evidence="4">
    <location>
        <begin position="710"/>
        <end position="722"/>
    </location>
</feature>
<feature type="binding site" evidence="2">
    <location>
        <begin position="191"/>
        <end position="198"/>
    </location>
    <ligand>
        <name>ATP</name>
        <dbReference type="ChEBI" id="CHEBI:30616"/>
    </ligand>
</feature>
<dbReference type="EC" id="3.6.4.13"/>
<dbReference type="EMBL" id="AAFW02000152">
    <property type="protein sequence ID" value="EDN59931.1"/>
    <property type="molecule type" value="Genomic_DNA"/>
</dbReference>
<dbReference type="SMR" id="A6ZZY8"/>
<dbReference type="HOGENOM" id="CLU_003041_26_2_1"/>
<dbReference type="Proteomes" id="UP000007060">
    <property type="component" value="Unassembled WGS sequence"/>
</dbReference>
<dbReference type="GO" id="GO:0005730">
    <property type="term" value="C:nucleolus"/>
    <property type="evidence" value="ECO:0007669"/>
    <property type="project" value="UniProtKB-SubCell"/>
</dbReference>
<dbReference type="GO" id="GO:0005524">
    <property type="term" value="F:ATP binding"/>
    <property type="evidence" value="ECO:0007669"/>
    <property type="project" value="UniProtKB-KW"/>
</dbReference>
<dbReference type="GO" id="GO:0016887">
    <property type="term" value="F:ATP hydrolysis activity"/>
    <property type="evidence" value="ECO:0007669"/>
    <property type="project" value="RHEA"/>
</dbReference>
<dbReference type="GO" id="GO:0003723">
    <property type="term" value="F:RNA binding"/>
    <property type="evidence" value="ECO:0007669"/>
    <property type="project" value="UniProtKB-KW"/>
</dbReference>
<dbReference type="GO" id="GO:0003724">
    <property type="term" value="F:RNA helicase activity"/>
    <property type="evidence" value="ECO:0007669"/>
    <property type="project" value="UniProtKB-EC"/>
</dbReference>
<dbReference type="GO" id="GO:0006364">
    <property type="term" value="P:rRNA processing"/>
    <property type="evidence" value="ECO:0007669"/>
    <property type="project" value="UniProtKB-KW"/>
</dbReference>
<dbReference type="CDD" id="cd17949">
    <property type="entry name" value="DEADc_DDX31"/>
    <property type="match status" value="1"/>
</dbReference>
<dbReference type="CDD" id="cd18787">
    <property type="entry name" value="SF2_C_DEAD"/>
    <property type="match status" value="1"/>
</dbReference>
<dbReference type="FunFam" id="3.40.50.300:FF:002326">
    <property type="entry name" value="ATP-dependent RNA helicase DBP7"/>
    <property type="match status" value="1"/>
</dbReference>
<dbReference type="Gene3D" id="3.40.50.300">
    <property type="entry name" value="P-loop containing nucleotide triphosphate hydrolases"/>
    <property type="match status" value="2"/>
</dbReference>
<dbReference type="InterPro" id="IPR011545">
    <property type="entry name" value="DEAD/DEAH_box_helicase_dom"/>
</dbReference>
<dbReference type="InterPro" id="IPR014001">
    <property type="entry name" value="Helicase_ATP-bd"/>
</dbReference>
<dbReference type="InterPro" id="IPR001650">
    <property type="entry name" value="Helicase_C-like"/>
</dbReference>
<dbReference type="InterPro" id="IPR027417">
    <property type="entry name" value="P-loop_NTPase"/>
</dbReference>
<dbReference type="InterPro" id="IPR025313">
    <property type="entry name" value="SPB4-like_CTE"/>
</dbReference>
<dbReference type="PANTHER" id="PTHR24031">
    <property type="entry name" value="RNA HELICASE"/>
    <property type="match status" value="1"/>
</dbReference>
<dbReference type="Pfam" id="PF13959">
    <property type="entry name" value="CTE_SPB4"/>
    <property type="match status" value="1"/>
</dbReference>
<dbReference type="Pfam" id="PF00270">
    <property type="entry name" value="DEAD"/>
    <property type="match status" value="1"/>
</dbReference>
<dbReference type="Pfam" id="PF00271">
    <property type="entry name" value="Helicase_C"/>
    <property type="match status" value="1"/>
</dbReference>
<dbReference type="SMART" id="SM00487">
    <property type="entry name" value="DEXDc"/>
    <property type="match status" value="1"/>
</dbReference>
<dbReference type="SMART" id="SM01178">
    <property type="entry name" value="DUF4217"/>
    <property type="match status" value="1"/>
</dbReference>
<dbReference type="SMART" id="SM00490">
    <property type="entry name" value="HELICc"/>
    <property type="match status" value="1"/>
</dbReference>
<dbReference type="SUPFAM" id="SSF52540">
    <property type="entry name" value="P-loop containing nucleoside triphosphate hydrolases"/>
    <property type="match status" value="2"/>
</dbReference>
<dbReference type="PROSITE" id="PS51192">
    <property type="entry name" value="HELICASE_ATP_BIND_1"/>
    <property type="match status" value="1"/>
</dbReference>
<dbReference type="PROSITE" id="PS51194">
    <property type="entry name" value="HELICASE_CTER"/>
    <property type="match status" value="1"/>
</dbReference>
<dbReference type="PROSITE" id="PS51195">
    <property type="entry name" value="Q_MOTIF"/>
    <property type="match status" value="1"/>
</dbReference>
<proteinExistence type="inferred from homology"/>